<gene>
    <name evidence="1" type="primary">recF</name>
    <name type="ordered locus">GTNG_0004</name>
</gene>
<organism>
    <name type="scientific">Geobacillus thermodenitrificans (strain NG80-2)</name>
    <dbReference type="NCBI Taxonomy" id="420246"/>
    <lineage>
        <taxon>Bacteria</taxon>
        <taxon>Bacillati</taxon>
        <taxon>Bacillota</taxon>
        <taxon>Bacilli</taxon>
        <taxon>Bacillales</taxon>
        <taxon>Anoxybacillaceae</taxon>
        <taxon>Geobacillus</taxon>
    </lineage>
</organism>
<reference key="1">
    <citation type="journal article" date="2007" name="Proc. Natl. Acad. Sci. U.S.A.">
        <title>Genome and proteome of long-chain alkane degrading Geobacillus thermodenitrificans NG80-2 isolated from a deep-subsurface oil reservoir.</title>
        <authorList>
            <person name="Feng L."/>
            <person name="Wang W."/>
            <person name="Cheng J."/>
            <person name="Ren Y."/>
            <person name="Zhao G."/>
            <person name="Gao C."/>
            <person name="Tang Y."/>
            <person name="Liu X."/>
            <person name="Han W."/>
            <person name="Peng X."/>
            <person name="Liu R."/>
            <person name="Wang L."/>
        </authorList>
    </citation>
    <scope>NUCLEOTIDE SEQUENCE [LARGE SCALE GENOMIC DNA]</scope>
    <source>
        <strain>NG80-2</strain>
    </source>
</reference>
<evidence type="ECO:0000255" key="1">
    <source>
        <dbReference type="HAMAP-Rule" id="MF_00365"/>
    </source>
</evidence>
<proteinExistence type="inferred from homology"/>
<dbReference type="EMBL" id="CP000557">
    <property type="protein sequence ID" value="ABO65391.1"/>
    <property type="molecule type" value="Genomic_DNA"/>
</dbReference>
<dbReference type="RefSeq" id="WP_008880836.1">
    <property type="nucleotide sequence ID" value="NC_009328.1"/>
</dbReference>
<dbReference type="SMR" id="A4IJ87"/>
<dbReference type="GeneID" id="87622452"/>
<dbReference type="KEGG" id="gtn:GTNG_0004"/>
<dbReference type="eggNOG" id="COG1195">
    <property type="taxonomic scope" value="Bacteria"/>
</dbReference>
<dbReference type="HOGENOM" id="CLU_040267_0_1_9"/>
<dbReference type="Proteomes" id="UP000001578">
    <property type="component" value="Chromosome"/>
</dbReference>
<dbReference type="GO" id="GO:0005737">
    <property type="term" value="C:cytoplasm"/>
    <property type="evidence" value="ECO:0007669"/>
    <property type="project" value="UniProtKB-SubCell"/>
</dbReference>
<dbReference type="GO" id="GO:0005524">
    <property type="term" value="F:ATP binding"/>
    <property type="evidence" value="ECO:0007669"/>
    <property type="project" value="UniProtKB-UniRule"/>
</dbReference>
<dbReference type="GO" id="GO:0003697">
    <property type="term" value="F:single-stranded DNA binding"/>
    <property type="evidence" value="ECO:0007669"/>
    <property type="project" value="UniProtKB-UniRule"/>
</dbReference>
<dbReference type="GO" id="GO:0006260">
    <property type="term" value="P:DNA replication"/>
    <property type="evidence" value="ECO:0007669"/>
    <property type="project" value="UniProtKB-UniRule"/>
</dbReference>
<dbReference type="GO" id="GO:0000731">
    <property type="term" value="P:DNA synthesis involved in DNA repair"/>
    <property type="evidence" value="ECO:0007669"/>
    <property type="project" value="TreeGrafter"/>
</dbReference>
<dbReference type="GO" id="GO:0006302">
    <property type="term" value="P:double-strand break repair"/>
    <property type="evidence" value="ECO:0007669"/>
    <property type="project" value="TreeGrafter"/>
</dbReference>
<dbReference type="GO" id="GO:0009432">
    <property type="term" value="P:SOS response"/>
    <property type="evidence" value="ECO:0007669"/>
    <property type="project" value="UniProtKB-UniRule"/>
</dbReference>
<dbReference type="CDD" id="cd03242">
    <property type="entry name" value="ABC_RecF"/>
    <property type="match status" value="1"/>
</dbReference>
<dbReference type="FunFam" id="1.20.1050.90:FF:000002">
    <property type="entry name" value="DNA replication and repair protein RecF"/>
    <property type="match status" value="1"/>
</dbReference>
<dbReference type="Gene3D" id="3.40.50.300">
    <property type="entry name" value="P-loop containing nucleotide triphosphate hydrolases"/>
    <property type="match status" value="1"/>
</dbReference>
<dbReference type="Gene3D" id="1.20.1050.90">
    <property type="entry name" value="RecF/RecN/SMC, N-terminal domain"/>
    <property type="match status" value="1"/>
</dbReference>
<dbReference type="HAMAP" id="MF_00365">
    <property type="entry name" value="RecF"/>
    <property type="match status" value="1"/>
</dbReference>
<dbReference type="InterPro" id="IPR001238">
    <property type="entry name" value="DNA-binding_RecF"/>
</dbReference>
<dbReference type="InterPro" id="IPR018078">
    <property type="entry name" value="DNA-binding_RecF_CS"/>
</dbReference>
<dbReference type="InterPro" id="IPR027417">
    <property type="entry name" value="P-loop_NTPase"/>
</dbReference>
<dbReference type="InterPro" id="IPR003395">
    <property type="entry name" value="RecF/RecN/SMC_N"/>
</dbReference>
<dbReference type="InterPro" id="IPR042174">
    <property type="entry name" value="RecF_2"/>
</dbReference>
<dbReference type="NCBIfam" id="TIGR00611">
    <property type="entry name" value="recf"/>
    <property type="match status" value="1"/>
</dbReference>
<dbReference type="PANTHER" id="PTHR32182">
    <property type="entry name" value="DNA REPLICATION AND REPAIR PROTEIN RECF"/>
    <property type="match status" value="1"/>
</dbReference>
<dbReference type="PANTHER" id="PTHR32182:SF0">
    <property type="entry name" value="DNA REPLICATION AND REPAIR PROTEIN RECF"/>
    <property type="match status" value="1"/>
</dbReference>
<dbReference type="Pfam" id="PF02463">
    <property type="entry name" value="SMC_N"/>
    <property type="match status" value="1"/>
</dbReference>
<dbReference type="SUPFAM" id="SSF52540">
    <property type="entry name" value="P-loop containing nucleoside triphosphate hydrolases"/>
    <property type="match status" value="1"/>
</dbReference>
<dbReference type="PROSITE" id="PS00617">
    <property type="entry name" value="RECF_1"/>
    <property type="match status" value="1"/>
</dbReference>
<dbReference type="PROSITE" id="PS00618">
    <property type="entry name" value="RECF_2"/>
    <property type="match status" value="1"/>
</dbReference>
<accession>A4IJ87</accession>
<name>RECF_GEOTN</name>
<feature type="chain" id="PRO_1000048526" description="DNA replication and repair protein RecF">
    <location>
        <begin position="1"/>
        <end position="372"/>
    </location>
</feature>
<feature type="binding site" evidence="1">
    <location>
        <begin position="30"/>
        <end position="37"/>
    </location>
    <ligand>
        <name>ATP</name>
        <dbReference type="ChEBI" id="CHEBI:30616"/>
    </ligand>
</feature>
<sequence>MFLTNLTLTNYRNYEHETLSFDQGVNIILGENAQGKTNMMEAIYVLAMAKSHRTTNDKDLIRWNEDYAKIEGRAEKRSGSLALELTISKKGKKARCNHIEQQRLSQYVGHLNVVMFAPEDLNLVKGSPQVRRRFIDMEIGQVSPVYIHDLSQYQKLLQQRNHYLKMMQAREQHDEAVLDVLTEQLMVLAAKITLRRRQFLALLEQWAMPIHHEISRGAERLHIRYEPSVDVSEKAELSRIVEAYSETFAAMREREIQRGTTLVGPHRDDIAFIVNGKNVQTFGSQGQQRTTALAVKLAEIELIFSELGDYPILLLDDVLSELDDFRQTHLLDAIRKKVQTFVTTTSIDGIKHDLIQEAAIYRVHSGSVAAPS</sequence>
<keyword id="KW-0067">ATP-binding</keyword>
<keyword id="KW-0963">Cytoplasm</keyword>
<keyword id="KW-0227">DNA damage</keyword>
<keyword id="KW-0234">DNA repair</keyword>
<keyword id="KW-0235">DNA replication</keyword>
<keyword id="KW-0238">DNA-binding</keyword>
<keyword id="KW-0547">Nucleotide-binding</keyword>
<keyword id="KW-0742">SOS response</keyword>
<protein>
    <recommendedName>
        <fullName evidence="1">DNA replication and repair protein RecF</fullName>
    </recommendedName>
</protein>
<comment type="function">
    <text evidence="1">The RecF protein is involved in DNA metabolism; it is required for DNA replication and normal SOS inducibility. RecF binds preferentially to single-stranded, linear DNA. It also seems to bind ATP.</text>
</comment>
<comment type="subcellular location">
    <subcellularLocation>
        <location evidence="1">Cytoplasm</location>
    </subcellularLocation>
</comment>
<comment type="similarity">
    <text evidence="1">Belongs to the RecF family.</text>
</comment>